<keyword id="KW-0028">Amino-acid biosynthesis</keyword>
<keyword id="KW-0057">Aromatic amino acid biosynthesis</keyword>
<keyword id="KW-0274">FAD</keyword>
<keyword id="KW-0285">Flavoprotein</keyword>
<keyword id="KW-0288">FMN</keyword>
<keyword id="KW-0456">Lyase</keyword>
<keyword id="KW-0521">NADP</keyword>
<keyword id="KW-1185">Reference proteome</keyword>
<evidence type="ECO:0000255" key="1">
    <source>
        <dbReference type="HAMAP-Rule" id="MF_00300"/>
    </source>
</evidence>
<reference key="1">
    <citation type="journal article" date="2007" name="J. Bacteriol.">
        <title>Whole-genome analysis of the methyl tert-butyl ether-degrading beta-proteobacterium Methylibium petroleiphilum PM1.</title>
        <authorList>
            <person name="Kane S.R."/>
            <person name="Chakicherla A.Y."/>
            <person name="Chain P.S.G."/>
            <person name="Schmidt R."/>
            <person name="Shin M.W."/>
            <person name="Legler T.C."/>
            <person name="Scow K.M."/>
            <person name="Larimer F.W."/>
            <person name="Lucas S.M."/>
            <person name="Richardson P.M."/>
            <person name="Hristova K.R."/>
        </authorList>
    </citation>
    <scope>NUCLEOTIDE SEQUENCE [LARGE SCALE GENOMIC DNA]</scope>
    <source>
        <strain>ATCC BAA-1232 / LMG 22953 / PM1</strain>
    </source>
</reference>
<sequence>MSGSTLGHLFCVTNFGESHGPAIGCVIDGCPPGMSLSEADIQPELDRRRPGTSRHVTQRNEPDAVEILSGVHEGRTTGTPICLLIRNTDQRSKDYGNIVQTFRPGHADYTYWHKYGLRDPRGGGRSSARLTAPMVGAGAVAKKWLKEHHGIAFRGGMAALGEIDIAFEGWQHVPDNPFFAPNASQIGQLEDFMDALRKEGDSVGARIVVEATGVPVGWGEPLFDKLDADIAHVMMGLNAVKGVEIGAGFASVAHRGSMHGDELTPQGFRSNHAGGVLGGISTGQDIRVSIAIKPTSSIRTPRQSIDLQGQPATVETFGRHDPCVGIRATPIAEALLALVLMDHALRHRAQCGDVRLPVAPIAAHLPDA</sequence>
<comment type="function">
    <text evidence="1">Catalyzes the anti-1,4-elimination of the C-3 phosphate and the C-6 proR hydrogen from 5-enolpyruvylshikimate-3-phosphate (EPSP) to yield chorismate, which is the branch point compound that serves as the starting substrate for the three terminal pathways of aromatic amino acid biosynthesis. This reaction introduces a second double bond into the aromatic ring system.</text>
</comment>
<comment type="catalytic activity">
    <reaction evidence="1">
        <text>5-O-(1-carboxyvinyl)-3-phosphoshikimate = chorismate + phosphate</text>
        <dbReference type="Rhea" id="RHEA:21020"/>
        <dbReference type="ChEBI" id="CHEBI:29748"/>
        <dbReference type="ChEBI" id="CHEBI:43474"/>
        <dbReference type="ChEBI" id="CHEBI:57701"/>
        <dbReference type="EC" id="4.2.3.5"/>
    </reaction>
</comment>
<comment type="cofactor">
    <cofactor evidence="1">
        <name>FMNH2</name>
        <dbReference type="ChEBI" id="CHEBI:57618"/>
    </cofactor>
    <text evidence="1">Reduced FMN (FMNH(2)).</text>
</comment>
<comment type="pathway">
    <text evidence="1">Metabolic intermediate biosynthesis; chorismate biosynthesis; chorismate from D-erythrose 4-phosphate and phosphoenolpyruvate: step 7/7.</text>
</comment>
<comment type="subunit">
    <text evidence="1">Homotetramer.</text>
</comment>
<comment type="similarity">
    <text evidence="1">Belongs to the chorismate synthase family.</text>
</comment>
<dbReference type="EC" id="4.2.3.5" evidence="1"/>
<dbReference type="EMBL" id="CP000555">
    <property type="protein sequence ID" value="ABM94387.1"/>
    <property type="molecule type" value="Genomic_DNA"/>
</dbReference>
<dbReference type="RefSeq" id="WP_011829024.1">
    <property type="nucleotide sequence ID" value="NC_008825.1"/>
</dbReference>
<dbReference type="SMR" id="A2SFP8"/>
<dbReference type="STRING" id="420662.Mpe_A1425"/>
<dbReference type="KEGG" id="mpt:Mpe_A1425"/>
<dbReference type="eggNOG" id="COG0082">
    <property type="taxonomic scope" value="Bacteria"/>
</dbReference>
<dbReference type="HOGENOM" id="CLU_034547_0_2_4"/>
<dbReference type="UniPathway" id="UPA00053">
    <property type="reaction ID" value="UER00090"/>
</dbReference>
<dbReference type="Proteomes" id="UP000000366">
    <property type="component" value="Chromosome"/>
</dbReference>
<dbReference type="GO" id="GO:0005829">
    <property type="term" value="C:cytosol"/>
    <property type="evidence" value="ECO:0007669"/>
    <property type="project" value="TreeGrafter"/>
</dbReference>
<dbReference type="GO" id="GO:0004107">
    <property type="term" value="F:chorismate synthase activity"/>
    <property type="evidence" value="ECO:0007669"/>
    <property type="project" value="UniProtKB-UniRule"/>
</dbReference>
<dbReference type="GO" id="GO:0010181">
    <property type="term" value="F:FMN binding"/>
    <property type="evidence" value="ECO:0007669"/>
    <property type="project" value="TreeGrafter"/>
</dbReference>
<dbReference type="GO" id="GO:0008652">
    <property type="term" value="P:amino acid biosynthetic process"/>
    <property type="evidence" value="ECO:0007669"/>
    <property type="project" value="UniProtKB-KW"/>
</dbReference>
<dbReference type="GO" id="GO:0009073">
    <property type="term" value="P:aromatic amino acid family biosynthetic process"/>
    <property type="evidence" value="ECO:0007669"/>
    <property type="project" value="UniProtKB-KW"/>
</dbReference>
<dbReference type="GO" id="GO:0009423">
    <property type="term" value="P:chorismate biosynthetic process"/>
    <property type="evidence" value="ECO:0007669"/>
    <property type="project" value="UniProtKB-UniRule"/>
</dbReference>
<dbReference type="CDD" id="cd07304">
    <property type="entry name" value="Chorismate_synthase"/>
    <property type="match status" value="1"/>
</dbReference>
<dbReference type="Gene3D" id="3.60.150.10">
    <property type="entry name" value="Chorismate synthase AroC"/>
    <property type="match status" value="1"/>
</dbReference>
<dbReference type="HAMAP" id="MF_00300">
    <property type="entry name" value="Chorismate_synth"/>
    <property type="match status" value="1"/>
</dbReference>
<dbReference type="InterPro" id="IPR000453">
    <property type="entry name" value="Chorismate_synth"/>
</dbReference>
<dbReference type="InterPro" id="IPR035904">
    <property type="entry name" value="Chorismate_synth_AroC_sf"/>
</dbReference>
<dbReference type="InterPro" id="IPR020541">
    <property type="entry name" value="Chorismate_synthase_CS"/>
</dbReference>
<dbReference type="NCBIfam" id="TIGR00033">
    <property type="entry name" value="aroC"/>
    <property type="match status" value="1"/>
</dbReference>
<dbReference type="NCBIfam" id="NF003793">
    <property type="entry name" value="PRK05382.1"/>
    <property type="match status" value="1"/>
</dbReference>
<dbReference type="PANTHER" id="PTHR21085">
    <property type="entry name" value="CHORISMATE SYNTHASE"/>
    <property type="match status" value="1"/>
</dbReference>
<dbReference type="PANTHER" id="PTHR21085:SF0">
    <property type="entry name" value="CHORISMATE SYNTHASE"/>
    <property type="match status" value="1"/>
</dbReference>
<dbReference type="Pfam" id="PF01264">
    <property type="entry name" value="Chorismate_synt"/>
    <property type="match status" value="1"/>
</dbReference>
<dbReference type="PIRSF" id="PIRSF001456">
    <property type="entry name" value="Chorismate_synth"/>
    <property type="match status" value="1"/>
</dbReference>
<dbReference type="SUPFAM" id="SSF103263">
    <property type="entry name" value="Chorismate synthase, AroC"/>
    <property type="match status" value="1"/>
</dbReference>
<dbReference type="PROSITE" id="PS00787">
    <property type="entry name" value="CHORISMATE_SYNTHASE_1"/>
    <property type="match status" value="1"/>
</dbReference>
<dbReference type="PROSITE" id="PS00788">
    <property type="entry name" value="CHORISMATE_SYNTHASE_2"/>
    <property type="match status" value="1"/>
</dbReference>
<dbReference type="PROSITE" id="PS00789">
    <property type="entry name" value="CHORISMATE_SYNTHASE_3"/>
    <property type="match status" value="1"/>
</dbReference>
<accession>A2SFP8</accession>
<gene>
    <name evidence="1" type="primary">aroC</name>
    <name type="ordered locus">Mpe_A1425</name>
</gene>
<protein>
    <recommendedName>
        <fullName evidence="1">Chorismate synthase</fullName>
        <shortName evidence="1">CS</shortName>
        <ecNumber evidence="1">4.2.3.5</ecNumber>
    </recommendedName>
    <alternativeName>
        <fullName evidence="1">5-enolpyruvylshikimate-3-phosphate phospholyase</fullName>
    </alternativeName>
</protein>
<organism>
    <name type="scientific">Methylibium petroleiphilum (strain ATCC BAA-1232 / LMG 22953 / PM1)</name>
    <dbReference type="NCBI Taxonomy" id="420662"/>
    <lineage>
        <taxon>Bacteria</taxon>
        <taxon>Pseudomonadati</taxon>
        <taxon>Pseudomonadota</taxon>
        <taxon>Betaproteobacteria</taxon>
        <taxon>Burkholderiales</taxon>
        <taxon>Sphaerotilaceae</taxon>
        <taxon>Methylibium</taxon>
    </lineage>
</organism>
<name>AROC_METPP</name>
<feature type="chain" id="PRO_1000022512" description="Chorismate synthase">
    <location>
        <begin position="1"/>
        <end position="368"/>
    </location>
</feature>
<feature type="binding site" evidence="1">
    <location>
        <position position="48"/>
    </location>
    <ligand>
        <name>NADP(+)</name>
        <dbReference type="ChEBI" id="CHEBI:58349"/>
    </ligand>
</feature>
<feature type="binding site" evidence="1">
    <location>
        <position position="54"/>
    </location>
    <ligand>
        <name>NADP(+)</name>
        <dbReference type="ChEBI" id="CHEBI:58349"/>
    </ligand>
</feature>
<feature type="binding site" evidence="1">
    <location>
        <begin position="125"/>
        <end position="127"/>
    </location>
    <ligand>
        <name>FMN</name>
        <dbReference type="ChEBI" id="CHEBI:58210"/>
    </ligand>
</feature>
<feature type="binding site" evidence="1">
    <location>
        <begin position="238"/>
        <end position="239"/>
    </location>
    <ligand>
        <name>FMN</name>
        <dbReference type="ChEBI" id="CHEBI:58210"/>
    </ligand>
</feature>
<feature type="binding site" evidence="1">
    <location>
        <position position="278"/>
    </location>
    <ligand>
        <name>FMN</name>
        <dbReference type="ChEBI" id="CHEBI:58210"/>
    </ligand>
</feature>
<feature type="binding site" evidence="1">
    <location>
        <begin position="293"/>
        <end position="297"/>
    </location>
    <ligand>
        <name>FMN</name>
        <dbReference type="ChEBI" id="CHEBI:58210"/>
    </ligand>
</feature>
<feature type="binding site" evidence="1">
    <location>
        <position position="319"/>
    </location>
    <ligand>
        <name>FMN</name>
        <dbReference type="ChEBI" id="CHEBI:58210"/>
    </ligand>
</feature>
<proteinExistence type="inferred from homology"/>